<name>ISPF_HALH5</name>
<proteinExistence type="inferred from homology"/>
<keyword id="KW-0414">Isoprene biosynthesis</keyword>
<keyword id="KW-0456">Lyase</keyword>
<keyword id="KW-0479">Metal-binding</keyword>
<keyword id="KW-1185">Reference proteome</keyword>
<gene>
    <name evidence="1" type="primary">ispF</name>
    <name type="ordered locus">BH0108</name>
</gene>
<reference key="1">
    <citation type="journal article" date="2000" name="Nucleic Acids Res.">
        <title>Complete genome sequence of the alkaliphilic bacterium Bacillus halodurans and genomic sequence comparison with Bacillus subtilis.</title>
        <authorList>
            <person name="Takami H."/>
            <person name="Nakasone K."/>
            <person name="Takaki Y."/>
            <person name="Maeno G."/>
            <person name="Sasaki R."/>
            <person name="Masui N."/>
            <person name="Fuji F."/>
            <person name="Hirama C."/>
            <person name="Nakamura Y."/>
            <person name="Ogasawara N."/>
            <person name="Kuhara S."/>
            <person name="Horikoshi K."/>
        </authorList>
    </citation>
    <scope>NUCLEOTIDE SEQUENCE [LARGE SCALE GENOMIC DNA]</scope>
    <source>
        <strain>ATCC BAA-125 / DSM 18197 / FERM 7344 / JCM 9153 / C-125</strain>
    </source>
</reference>
<organism>
    <name type="scientific">Halalkalibacterium halodurans (strain ATCC BAA-125 / DSM 18197 / FERM 7344 / JCM 9153 / C-125)</name>
    <name type="common">Bacillus halodurans</name>
    <dbReference type="NCBI Taxonomy" id="272558"/>
    <lineage>
        <taxon>Bacteria</taxon>
        <taxon>Bacillati</taxon>
        <taxon>Bacillota</taxon>
        <taxon>Bacilli</taxon>
        <taxon>Bacillales</taxon>
        <taxon>Bacillaceae</taxon>
        <taxon>Halalkalibacterium (ex Joshi et al. 2022)</taxon>
    </lineage>
</organism>
<sequence length="157" mass="16751">MIRVGQGFDVHQFAEGRLLIIGGVEIPYEKGLLGHSDADVLLHTIADAALGAIGEGDIGKHFPDTDPHFKDADSAKLLSAVWELVKEKGYTLGNVDCTIIAQKPKMAPHIPAMRARIAELLEAEEAQVNVKATTTETLGFTGRGEGIASQAVILLVK</sequence>
<comment type="function">
    <text evidence="1">Involved in the biosynthesis of isopentenyl diphosphate (IPP) and dimethylallyl diphosphate (DMAPP), two major building blocks of isoprenoid compounds. Catalyzes the conversion of 4-diphosphocytidyl-2-C-methyl-D-erythritol 2-phosphate (CDP-ME2P) to 2-C-methyl-D-erythritol 2,4-cyclodiphosphate (ME-CPP) with a corresponding release of cytidine 5-monophosphate (CMP).</text>
</comment>
<comment type="catalytic activity">
    <reaction evidence="1">
        <text>4-CDP-2-C-methyl-D-erythritol 2-phosphate = 2-C-methyl-D-erythritol 2,4-cyclic diphosphate + CMP</text>
        <dbReference type="Rhea" id="RHEA:23864"/>
        <dbReference type="ChEBI" id="CHEBI:57919"/>
        <dbReference type="ChEBI" id="CHEBI:58483"/>
        <dbReference type="ChEBI" id="CHEBI:60377"/>
        <dbReference type="EC" id="4.6.1.12"/>
    </reaction>
</comment>
<comment type="cofactor">
    <cofactor evidence="1">
        <name>a divalent metal cation</name>
        <dbReference type="ChEBI" id="CHEBI:60240"/>
    </cofactor>
    <text evidence="1">Binds 1 divalent metal cation per subunit.</text>
</comment>
<comment type="pathway">
    <text evidence="1">Isoprenoid biosynthesis; isopentenyl diphosphate biosynthesis via DXP pathway; isopentenyl diphosphate from 1-deoxy-D-xylulose 5-phosphate: step 4/6.</text>
</comment>
<comment type="subunit">
    <text evidence="1">Homotrimer.</text>
</comment>
<comment type="similarity">
    <text evidence="1">Belongs to the IspF family.</text>
</comment>
<protein>
    <recommendedName>
        <fullName evidence="1">2-C-methyl-D-erythritol 2,4-cyclodiphosphate synthase</fullName>
        <shortName evidence="1">MECDP-synthase</shortName>
        <shortName evidence="1">MECPP-synthase</shortName>
        <shortName evidence="1">MECPS</shortName>
        <ecNumber evidence="1">4.6.1.12</ecNumber>
    </recommendedName>
</protein>
<dbReference type="EC" id="4.6.1.12" evidence="1"/>
<dbReference type="EMBL" id="BA000004">
    <property type="protein sequence ID" value="BAB03827.1"/>
    <property type="molecule type" value="Genomic_DNA"/>
</dbReference>
<dbReference type="PIR" id="D83663">
    <property type="entry name" value="D83663"/>
</dbReference>
<dbReference type="RefSeq" id="WP_010896291.1">
    <property type="nucleotide sequence ID" value="NC_002570.2"/>
</dbReference>
<dbReference type="SMR" id="Q9KGF7"/>
<dbReference type="STRING" id="272558.gene:10725948"/>
<dbReference type="KEGG" id="bha:BH0108"/>
<dbReference type="eggNOG" id="COG0245">
    <property type="taxonomic scope" value="Bacteria"/>
</dbReference>
<dbReference type="HOGENOM" id="CLU_084630_2_0_9"/>
<dbReference type="OrthoDB" id="9804336at2"/>
<dbReference type="UniPathway" id="UPA00056">
    <property type="reaction ID" value="UER00095"/>
</dbReference>
<dbReference type="Proteomes" id="UP000001258">
    <property type="component" value="Chromosome"/>
</dbReference>
<dbReference type="GO" id="GO:0008685">
    <property type="term" value="F:2-C-methyl-D-erythritol 2,4-cyclodiphosphate synthase activity"/>
    <property type="evidence" value="ECO:0007669"/>
    <property type="project" value="UniProtKB-UniRule"/>
</dbReference>
<dbReference type="GO" id="GO:0046872">
    <property type="term" value="F:metal ion binding"/>
    <property type="evidence" value="ECO:0007669"/>
    <property type="project" value="UniProtKB-KW"/>
</dbReference>
<dbReference type="GO" id="GO:0019288">
    <property type="term" value="P:isopentenyl diphosphate biosynthetic process, methylerythritol 4-phosphate pathway"/>
    <property type="evidence" value="ECO:0007669"/>
    <property type="project" value="UniProtKB-UniRule"/>
</dbReference>
<dbReference type="GO" id="GO:0016114">
    <property type="term" value="P:terpenoid biosynthetic process"/>
    <property type="evidence" value="ECO:0007669"/>
    <property type="project" value="InterPro"/>
</dbReference>
<dbReference type="CDD" id="cd00554">
    <property type="entry name" value="MECDP_synthase"/>
    <property type="match status" value="1"/>
</dbReference>
<dbReference type="FunFam" id="3.30.1330.50:FF:000001">
    <property type="entry name" value="2-C-methyl-D-erythritol 2,4-cyclodiphosphate synthase"/>
    <property type="match status" value="1"/>
</dbReference>
<dbReference type="Gene3D" id="3.30.1330.50">
    <property type="entry name" value="2-C-methyl-D-erythritol 2,4-cyclodiphosphate synthase"/>
    <property type="match status" value="1"/>
</dbReference>
<dbReference type="HAMAP" id="MF_00107">
    <property type="entry name" value="IspF"/>
    <property type="match status" value="1"/>
</dbReference>
<dbReference type="InterPro" id="IPR003526">
    <property type="entry name" value="MECDP_synthase"/>
</dbReference>
<dbReference type="InterPro" id="IPR020555">
    <property type="entry name" value="MECDP_synthase_CS"/>
</dbReference>
<dbReference type="InterPro" id="IPR036571">
    <property type="entry name" value="MECDP_synthase_sf"/>
</dbReference>
<dbReference type="NCBIfam" id="TIGR00151">
    <property type="entry name" value="ispF"/>
    <property type="match status" value="1"/>
</dbReference>
<dbReference type="PANTHER" id="PTHR43181">
    <property type="entry name" value="2-C-METHYL-D-ERYTHRITOL 2,4-CYCLODIPHOSPHATE SYNTHASE, CHLOROPLASTIC"/>
    <property type="match status" value="1"/>
</dbReference>
<dbReference type="PANTHER" id="PTHR43181:SF1">
    <property type="entry name" value="2-C-METHYL-D-ERYTHRITOL 2,4-CYCLODIPHOSPHATE SYNTHASE, CHLOROPLASTIC"/>
    <property type="match status" value="1"/>
</dbReference>
<dbReference type="Pfam" id="PF02542">
    <property type="entry name" value="YgbB"/>
    <property type="match status" value="1"/>
</dbReference>
<dbReference type="SUPFAM" id="SSF69765">
    <property type="entry name" value="IpsF-like"/>
    <property type="match status" value="1"/>
</dbReference>
<dbReference type="PROSITE" id="PS01350">
    <property type="entry name" value="ISPF"/>
    <property type="match status" value="1"/>
</dbReference>
<accession>Q9KGF7</accession>
<evidence type="ECO:0000255" key="1">
    <source>
        <dbReference type="HAMAP-Rule" id="MF_00107"/>
    </source>
</evidence>
<feature type="chain" id="PRO_0000189438" description="2-C-methyl-D-erythritol 2,4-cyclodiphosphate synthase">
    <location>
        <begin position="1"/>
        <end position="157"/>
    </location>
</feature>
<feature type="binding site" evidence="1">
    <location>
        <begin position="9"/>
        <end position="11"/>
    </location>
    <ligand>
        <name>4-CDP-2-C-methyl-D-erythritol 2-phosphate</name>
        <dbReference type="ChEBI" id="CHEBI:57919"/>
    </ligand>
</feature>
<feature type="binding site" evidence="1">
    <location>
        <position position="9"/>
    </location>
    <ligand>
        <name>a divalent metal cation</name>
        <dbReference type="ChEBI" id="CHEBI:60240"/>
    </ligand>
</feature>
<feature type="binding site" evidence="1">
    <location>
        <position position="11"/>
    </location>
    <ligand>
        <name>a divalent metal cation</name>
        <dbReference type="ChEBI" id="CHEBI:60240"/>
    </ligand>
</feature>
<feature type="binding site" evidence="1">
    <location>
        <begin position="35"/>
        <end position="36"/>
    </location>
    <ligand>
        <name>4-CDP-2-C-methyl-D-erythritol 2-phosphate</name>
        <dbReference type="ChEBI" id="CHEBI:57919"/>
    </ligand>
</feature>
<feature type="binding site" evidence="1">
    <location>
        <position position="43"/>
    </location>
    <ligand>
        <name>a divalent metal cation</name>
        <dbReference type="ChEBI" id="CHEBI:60240"/>
    </ligand>
</feature>
<feature type="binding site" evidence="1">
    <location>
        <begin position="57"/>
        <end position="59"/>
    </location>
    <ligand>
        <name>4-CDP-2-C-methyl-D-erythritol 2-phosphate</name>
        <dbReference type="ChEBI" id="CHEBI:57919"/>
    </ligand>
</feature>
<feature type="binding site" evidence="1">
    <location>
        <begin position="62"/>
        <end position="66"/>
    </location>
    <ligand>
        <name>4-CDP-2-C-methyl-D-erythritol 2-phosphate</name>
        <dbReference type="ChEBI" id="CHEBI:57919"/>
    </ligand>
</feature>
<feature type="binding site" evidence="1">
    <location>
        <begin position="101"/>
        <end position="107"/>
    </location>
    <ligand>
        <name>4-CDP-2-C-methyl-D-erythritol 2-phosphate</name>
        <dbReference type="ChEBI" id="CHEBI:57919"/>
    </ligand>
</feature>
<feature type="binding site" evidence="1">
    <location>
        <begin position="133"/>
        <end position="136"/>
    </location>
    <ligand>
        <name>4-CDP-2-C-methyl-D-erythritol 2-phosphate</name>
        <dbReference type="ChEBI" id="CHEBI:57919"/>
    </ligand>
</feature>
<feature type="binding site" evidence="1">
    <location>
        <position position="140"/>
    </location>
    <ligand>
        <name>4-CDP-2-C-methyl-D-erythritol 2-phosphate</name>
        <dbReference type="ChEBI" id="CHEBI:57919"/>
    </ligand>
</feature>
<feature type="binding site" evidence="1">
    <location>
        <position position="143"/>
    </location>
    <ligand>
        <name>4-CDP-2-C-methyl-D-erythritol 2-phosphate</name>
        <dbReference type="ChEBI" id="CHEBI:57919"/>
    </ligand>
</feature>
<feature type="site" description="Transition state stabilizer" evidence="1">
    <location>
        <position position="35"/>
    </location>
</feature>
<feature type="site" description="Transition state stabilizer" evidence="1">
    <location>
        <position position="134"/>
    </location>
</feature>